<accession>Q12335</accession>
<accession>D6VS16</accession>
<keyword id="KW-0002">3D-structure</keyword>
<keyword id="KW-1185">Reference proteome</keyword>
<keyword id="KW-0964">Secreted</keyword>
<keyword id="KW-0732">Signal</keyword>
<dbReference type="EMBL" id="Z74328">
    <property type="protein sequence ID" value="CAA98854.1"/>
    <property type="molecule type" value="Genomic_DNA"/>
</dbReference>
<dbReference type="EMBL" id="Z68196">
    <property type="protein sequence ID" value="CAA92369.1"/>
    <property type="molecule type" value="Genomic_DNA"/>
</dbReference>
<dbReference type="EMBL" id="AY557646">
    <property type="protein sequence ID" value="AAS55972.1"/>
    <property type="molecule type" value="Genomic_DNA"/>
</dbReference>
<dbReference type="EMBL" id="BK006938">
    <property type="protein sequence ID" value="DAA11876.1"/>
    <property type="molecule type" value="Genomic_DNA"/>
</dbReference>
<dbReference type="PIR" id="S61585">
    <property type="entry name" value="S61585"/>
</dbReference>
<dbReference type="RefSeq" id="NP_010315.1">
    <property type="nucleotide sequence ID" value="NM_001180340.1"/>
</dbReference>
<dbReference type="PDB" id="5MP4">
    <property type="method" value="X-ray"/>
    <property type="resolution" value="2.79 A"/>
    <property type="chains" value="A/B/C/D/E/F/G/H=1-198"/>
</dbReference>
<dbReference type="PDBsum" id="5MP4"/>
<dbReference type="SMR" id="Q12335"/>
<dbReference type="BioGRID" id="32081">
    <property type="interactions" value="153"/>
</dbReference>
<dbReference type="DIP" id="DIP-1762N"/>
<dbReference type="FunCoup" id="Q12335">
    <property type="interactions" value="548"/>
</dbReference>
<dbReference type="IntAct" id="Q12335">
    <property type="interactions" value="52"/>
</dbReference>
<dbReference type="MINT" id="Q12335"/>
<dbReference type="STRING" id="4932.YDR032C"/>
<dbReference type="CAZy" id="AA6">
    <property type="family name" value="Auxiliary Activities 6"/>
</dbReference>
<dbReference type="iPTMnet" id="Q12335"/>
<dbReference type="PaxDb" id="4932-YDR032C"/>
<dbReference type="PeptideAtlas" id="Q12335"/>
<dbReference type="TopDownProteomics" id="Q12335"/>
<dbReference type="EnsemblFungi" id="YDR032C_mRNA">
    <property type="protein sequence ID" value="YDR032C"/>
    <property type="gene ID" value="YDR032C"/>
</dbReference>
<dbReference type="GeneID" id="851596"/>
<dbReference type="KEGG" id="sce:YDR032C"/>
<dbReference type="AGR" id="SGD:S000002439"/>
<dbReference type="SGD" id="S000002439">
    <property type="gene designation" value="PST2"/>
</dbReference>
<dbReference type="VEuPathDB" id="FungiDB:YDR032C"/>
<dbReference type="eggNOG" id="KOG3135">
    <property type="taxonomic scope" value="Eukaryota"/>
</dbReference>
<dbReference type="GeneTree" id="ENSGT00940000176381"/>
<dbReference type="HOGENOM" id="CLU_051402_0_1_1"/>
<dbReference type="InParanoid" id="Q12335"/>
<dbReference type="OMA" id="KFADGNP"/>
<dbReference type="OrthoDB" id="504689at2759"/>
<dbReference type="BioCyc" id="YEAST:G3O-29647-MONOMER"/>
<dbReference type="BioGRID-ORCS" id="851596">
    <property type="hits" value="9 hits in 10 CRISPR screens"/>
</dbReference>
<dbReference type="PRO" id="PR:Q12335"/>
<dbReference type="Proteomes" id="UP000002311">
    <property type="component" value="Chromosome IV"/>
</dbReference>
<dbReference type="RNAct" id="Q12335">
    <property type="molecule type" value="protein"/>
</dbReference>
<dbReference type="GO" id="GO:0005737">
    <property type="term" value="C:cytoplasm"/>
    <property type="evidence" value="ECO:0007005"/>
    <property type="project" value="SGD"/>
</dbReference>
<dbReference type="GO" id="GO:0032126">
    <property type="term" value="C:eisosome"/>
    <property type="evidence" value="ECO:0000314"/>
    <property type="project" value="SGD"/>
</dbReference>
<dbReference type="GO" id="GO:0005576">
    <property type="term" value="C:extracellular region"/>
    <property type="evidence" value="ECO:0007669"/>
    <property type="project" value="UniProtKB-SubCell"/>
</dbReference>
<dbReference type="GO" id="GO:0016020">
    <property type="term" value="C:membrane"/>
    <property type="evidence" value="ECO:0000318"/>
    <property type="project" value="GO_Central"/>
</dbReference>
<dbReference type="GO" id="GO:0005739">
    <property type="term" value="C:mitochondrion"/>
    <property type="evidence" value="ECO:0007005"/>
    <property type="project" value="SGD"/>
</dbReference>
<dbReference type="GO" id="GO:0005886">
    <property type="term" value="C:plasma membrane"/>
    <property type="evidence" value="ECO:0007005"/>
    <property type="project" value="SGD"/>
</dbReference>
<dbReference type="GO" id="GO:0010181">
    <property type="term" value="F:FMN binding"/>
    <property type="evidence" value="ECO:0007669"/>
    <property type="project" value="InterPro"/>
</dbReference>
<dbReference type="GO" id="GO:0042802">
    <property type="term" value="F:identical protein binding"/>
    <property type="evidence" value="ECO:0000353"/>
    <property type="project" value="IntAct"/>
</dbReference>
<dbReference type="GO" id="GO:0003955">
    <property type="term" value="F:NAD(P)H dehydrogenase (quinone) activity"/>
    <property type="evidence" value="ECO:0000314"/>
    <property type="project" value="SGD"/>
</dbReference>
<dbReference type="GO" id="GO:0160020">
    <property type="term" value="P:positive regulation of ferroptosis"/>
    <property type="evidence" value="ECO:0000315"/>
    <property type="project" value="SGD"/>
</dbReference>
<dbReference type="FunFam" id="3.40.50.360:FF:000001">
    <property type="entry name" value="NAD(P)H dehydrogenase (Quinone) FQR1-like"/>
    <property type="match status" value="1"/>
</dbReference>
<dbReference type="Gene3D" id="3.40.50.360">
    <property type="match status" value="1"/>
</dbReference>
<dbReference type="InterPro" id="IPR008254">
    <property type="entry name" value="Flavodoxin/NO_synth"/>
</dbReference>
<dbReference type="InterPro" id="IPR029039">
    <property type="entry name" value="Flavoprotein-like_sf"/>
</dbReference>
<dbReference type="InterPro" id="IPR010089">
    <property type="entry name" value="Flavoprotein_WrbA-like"/>
</dbReference>
<dbReference type="InterPro" id="IPR005025">
    <property type="entry name" value="FMN_Rdtase-like_dom"/>
</dbReference>
<dbReference type="NCBIfam" id="TIGR01755">
    <property type="entry name" value="flav_wrbA"/>
    <property type="match status" value="1"/>
</dbReference>
<dbReference type="NCBIfam" id="NF002999">
    <property type="entry name" value="PRK03767.1"/>
    <property type="match status" value="1"/>
</dbReference>
<dbReference type="PANTHER" id="PTHR30546">
    <property type="entry name" value="FLAVODOXIN-RELATED PROTEIN WRBA-RELATED"/>
    <property type="match status" value="1"/>
</dbReference>
<dbReference type="PANTHER" id="PTHR30546:SF23">
    <property type="entry name" value="FLAVOPROTEIN-LIKE PROTEIN YCP4-RELATED"/>
    <property type="match status" value="1"/>
</dbReference>
<dbReference type="Pfam" id="PF03358">
    <property type="entry name" value="FMN_red"/>
    <property type="match status" value="1"/>
</dbReference>
<dbReference type="SUPFAM" id="SSF52218">
    <property type="entry name" value="Flavoproteins"/>
    <property type="match status" value="1"/>
</dbReference>
<dbReference type="PROSITE" id="PS50902">
    <property type="entry name" value="FLAVODOXIN_LIKE"/>
    <property type="match status" value="1"/>
</dbReference>
<feature type="signal peptide" evidence="1">
    <location>
        <begin position="1"/>
        <end position="21"/>
    </location>
</feature>
<feature type="chain" id="PRO_0000041482" description="Protoplast secreted protein 2">
    <location>
        <begin position="22"/>
        <end position="198"/>
    </location>
</feature>
<feature type="domain" description="Flavodoxin-like" evidence="2">
    <location>
        <begin position="22"/>
        <end position="191"/>
    </location>
</feature>
<feature type="strand" evidence="5">
    <location>
        <begin position="3"/>
        <end position="8"/>
    </location>
</feature>
<feature type="strand" evidence="5">
    <location>
        <begin position="11"/>
        <end position="13"/>
    </location>
</feature>
<feature type="helix" evidence="5">
    <location>
        <begin position="14"/>
        <end position="28"/>
    </location>
</feature>
<feature type="strand" evidence="5">
    <location>
        <begin position="32"/>
        <end position="38"/>
    </location>
</feature>
<feature type="helix" evidence="5">
    <location>
        <begin position="44"/>
        <end position="50"/>
    </location>
</feature>
<feature type="helix" evidence="5">
    <location>
        <begin position="63"/>
        <end position="68"/>
    </location>
</feature>
<feature type="strand" evidence="5">
    <location>
        <begin position="70"/>
        <end position="77"/>
    </location>
</feature>
<feature type="strand" evidence="5">
    <location>
        <begin position="79"/>
        <end position="82"/>
    </location>
</feature>
<feature type="helix" evidence="5">
    <location>
        <begin position="85"/>
        <end position="92"/>
    </location>
</feature>
<feature type="helix" evidence="5">
    <location>
        <begin position="95"/>
        <end position="99"/>
    </location>
</feature>
<feature type="turn" evidence="5">
    <location>
        <begin position="100"/>
        <end position="105"/>
    </location>
</feature>
<feature type="strand" evidence="5">
    <location>
        <begin position="107"/>
        <end position="117"/>
    </location>
</feature>
<feature type="turn" evidence="5">
    <location>
        <begin position="118"/>
        <end position="121"/>
    </location>
</feature>
<feature type="helix" evidence="5">
    <location>
        <begin position="122"/>
        <end position="125"/>
    </location>
</feature>
<feature type="helix" evidence="5">
    <location>
        <begin position="128"/>
        <end position="134"/>
    </location>
</feature>
<feature type="helix" evidence="5">
    <location>
        <begin position="144"/>
        <end position="146"/>
    </location>
</feature>
<feature type="helix" evidence="5">
    <location>
        <begin position="147"/>
        <end position="150"/>
    </location>
</feature>
<feature type="strand" evidence="5">
    <location>
        <begin position="163"/>
        <end position="167"/>
    </location>
</feature>
<feature type="strand" evidence="5">
    <location>
        <begin position="170"/>
        <end position="172"/>
    </location>
</feature>
<feature type="helix" evidence="5">
    <location>
        <begin position="178"/>
        <end position="197"/>
    </location>
</feature>
<reference key="1">
    <citation type="journal article" date="1997" name="Nature">
        <title>The nucleotide sequence of Saccharomyces cerevisiae chromosome IV.</title>
        <authorList>
            <person name="Jacq C."/>
            <person name="Alt-Moerbe J."/>
            <person name="Andre B."/>
            <person name="Arnold W."/>
            <person name="Bahr A."/>
            <person name="Ballesta J.P.G."/>
            <person name="Bargues M."/>
            <person name="Baron L."/>
            <person name="Becker A."/>
            <person name="Biteau N."/>
            <person name="Bloecker H."/>
            <person name="Blugeon C."/>
            <person name="Boskovic J."/>
            <person name="Brandt P."/>
            <person name="Brueckner M."/>
            <person name="Buitrago M.J."/>
            <person name="Coster F."/>
            <person name="Delaveau T."/>
            <person name="del Rey F."/>
            <person name="Dujon B."/>
            <person name="Eide L.G."/>
            <person name="Garcia-Cantalejo J.M."/>
            <person name="Goffeau A."/>
            <person name="Gomez-Peris A."/>
            <person name="Granotier C."/>
            <person name="Hanemann V."/>
            <person name="Hankeln T."/>
            <person name="Hoheisel J.D."/>
            <person name="Jaeger W."/>
            <person name="Jimenez A."/>
            <person name="Jonniaux J.-L."/>
            <person name="Kraemer C."/>
            <person name="Kuester H."/>
            <person name="Laamanen P."/>
            <person name="Legros Y."/>
            <person name="Louis E.J."/>
            <person name="Moeller-Rieker S."/>
            <person name="Monnet A."/>
            <person name="Moro M."/>
            <person name="Mueller-Auer S."/>
            <person name="Nussbaumer B."/>
            <person name="Paricio N."/>
            <person name="Paulin L."/>
            <person name="Perea J."/>
            <person name="Perez-Alonso M."/>
            <person name="Perez-Ortin J.E."/>
            <person name="Pohl T.M."/>
            <person name="Prydz H."/>
            <person name="Purnelle B."/>
            <person name="Rasmussen S.W."/>
            <person name="Remacha M.A."/>
            <person name="Revuelta J.L."/>
            <person name="Rieger M."/>
            <person name="Salom D."/>
            <person name="Saluz H.P."/>
            <person name="Saiz J.E."/>
            <person name="Saren A.-M."/>
            <person name="Schaefer M."/>
            <person name="Scharfe M."/>
            <person name="Schmidt E.R."/>
            <person name="Schneider C."/>
            <person name="Scholler P."/>
            <person name="Schwarz S."/>
            <person name="Soler-Mira A."/>
            <person name="Urrestarazu L.A."/>
            <person name="Verhasselt P."/>
            <person name="Vissers S."/>
            <person name="Voet M."/>
            <person name="Volckaert G."/>
            <person name="Wagner G."/>
            <person name="Wambutt R."/>
            <person name="Wedler E."/>
            <person name="Wedler H."/>
            <person name="Woelfl S."/>
            <person name="Harris D.E."/>
            <person name="Bowman S."/>
            <person name="Brown D."/>
            <person name="Churcher C.M."/>
            <person name="Connor R."/>
            <person name="Dedman K."/>
            <person name="Gentles S."/>
            <person name="Hamlin N."/>
            <person name="Hunt S."/>
            <person name="Jones L."/>
            <person name="McDonald S."/>
            <person name="Murphy L.D."/>
            <person name="Niblett D."/>
            <person name="Odell C."/>
            <person name="Oliver K."/>
            <person name="Rajandream M.A."/>
            <person name="Richards C."/>
            <person name="Shore L."/>
            <person name="Walsh S.V."/>
            <person name="Barrell B.G."/>
            <person name="Dietrich F.S."/>
            <person name="Mulligan J.T."/>
            <person name="Allen E."/>
            <person name="Araujo R."/>
            <person name="Aviles E."/>
            <person name="Berno A."/>
            <person name="Carpenter J."/>
            <person name="Chen E."/>
            <person name="Cherry J.M."/>
            <person name="Chung E."/>
            <person name="Duncan M."/>
            <person name="Hunicke-Smith S."/>
            <person name="Hyman R.W."/>
            <person name="Komp C."/>
            <person name="Lashkari D."/>
            <person name="Lew H."/>
            <person name="Lin D."/>
            <person name="Mosedale D."/>
            <person name="Nakahara K."/>
            <person name="Namath A."/>
            <person name="Oefner P."/>
            <person name="Oh C."/>
            <person name="Petel F.X."/>
            <person name="Roberts D."/>
            <person name="Schramm S."/>
            <person name="Schroeder M."/>
            <person name="Shogren T."/>
            <person name="Shroff N."/>
            <person name="Winant A."/>
            <person name="Yelton M.A."/>
            <person name="Botstein D."/>
            <person name="Davis R.W."/>
            <person name="Johnston M."/>
            <person name="Andrews S."/>
            <person name="Brinkman R."/>
            <person name="Cooper J."/>
            <person name="Ding H."/>
            <person name="Du Z."/>
            <person name="Favello A."/>
            <person name="Fulton L."/>
            <person name="Gattung S."/>
            <person name="Greco T."/>
            <person name="Hallsworth K."/>
            <person name="Hawkins J."/>
            <person name="Hillier L.W."/>
            <person name="Jier M."/>
            <person name="Johnson D."/>
            <person name="Johnston L."/>
            <person name="Kirsten J."/>
            <person name="Kucaba T."/>
            <person name="Langston Y."/>
            <person name="Latreille P."/>
            <person name="Le T."/>
            <person name="Mardis E."/>
            <person name="Menezes S."/>
            <person name="Miller N."/>
            <person name="Nhan M."/>
            <person name="Pauley A."/>
            <person name="Peluso D."/>
            <person name="Rifkin L."/>
            <person name="Riles L."/>
            <person name="Taich A."/>
            <person name="Trevaskis E."/>
            <person name="Vignati D."/>
            <person name="Wilcox L."/>
            <person name="Wohldman P."/>
            <person name="Vaudin M."/>
            <person name="Wilson R."/>
            <person name="Waterston R."/>
            <person name="Albermann K."/>
            <person name="Hani J."/>
            <person name="Heumann K."/>
            <person name="Kleine K."/>
            <person name="Mewes H.-W."/>
            <person name="Zollner A."/>
            <person name="Zaccaria P."/>
        </authorList>
    </citation>
    <scope>NUCLEOTIDE SEQUENCE [LARGE SCALE GENOMIC DNA]</scope>
    <source>
        <strain>ATCC 204508 / S288c</strain>
    </source>
</reference>
<reference key="2">
    <citation type="journal article" date="2014" name="G3 (Bethesda)">
        <title>The reference genome sequence of Saccharomyces cerevisiae: Then and now.</title>
        <authorList>
            <person name="Engel S.R."/>
            <person name="Dietrich F.S."/>
            <person name="Fisk D.G."/>
            <person name="Binkley G."/>
            <person name="Balakrishnan R."/>
            <person name="Costanzo M.C."/>
            <person name="Dwight S.S."/>
            <person name="Hitz B.C."/>
            <person name="Karra K."/>
            <person name="Nash R.S."/>
            <person name="Weng S."/>
            <person name="Wong E.D."/>
            <person name="Lloyd P."/>
            <person name="Skrzypek M.S."/>
            <person name="Miyasato S.R."/>
            <person name="Simison M."/>
            <person name="Cherry J.M."/>
        </authorList>
    </citation>
    <scope>GENOME REANNOTATION</scope>
    <source>
        <strain>ATCC 204508 / S288c</strain>
    </source>
</reference>
<reference key="3">
    <citation type="journal article" date="2007" name="Genome Res.">
        <title>Approaching a complete repository of sequence-verified protein-encoding clones for Saccharomyces cerevisiae.</title>
        <authorList>
            <person name="Hu Y."/>
            <person name="Rolfs A."/>
            <person name="Bhullar B."/>
            <person name="Murthy T.V.S."/>
            <person name="Zhu C."/>
            <person name="Berger M.F."/>
            <person name="Camargo A.A."/>
            <person name="Kelley F."/>
            <person name="McCarron S."/>
            <person name="Jepson D."/>
            <person name="Richardson A."/>
            <person name="Raphael J."/>
            <person name="Moreira D."/>
            <person name="Taycher E."/>
            <person name="Zuo D."/>
            <person name="Mohr S."/>
            <person name="Kane M.F."/>
            <person name="Williamson J."/>
            <person name="Simpson A.J.G."/>
            <person name="Bulyk M.L."/>
            <person name="Harlow E."/>
            <person name="Marsischky G."/>
            <person name="Kolodner R.D."/>
            <person name="LaBaer J."/>
        </authorList>
    </citation>
    <scope>NUCLEOTIDE SEQUENCE [GENOMIC DNA]</scope>
    <source>
        <strain>ATCC 204508 / S288c</strain>
    </source>
</reference>
<reference key="4">
    <citation type="journal article" date="2000" name="Electrophoresis">
        <title>A proteomic approach for the study of Saccharomyces cerevisiae cell wall biogenesis.</title>
        <authorList>
            <person name="Pardo M."/>
            <person name="Ward M."/>
            <person name="Bains S."/>
            <person name="Molina M."/>
            <person name="Blackstock W."/>
            <person name="Gil C."/>
            <person name="Nombela C."/>
        </authorList>
    </citation>
    <scope>IDENTIFICATION</scope>
</reference>
<reference key="5">
    <citation type="journal article" date="2003" name="Nature">
        <title>Global analysis of protein expression in yeast.</title>
        <authorList>
            <person name="Ghaemmaghami S."/>
            <person name="Huh W.-K."/>
            <person name="Bower K."/>
            <person name="Howson R.W."/>
            <person name="Belle A."/>
            <person name="Dephoure N."/>
            <person name="O'Shea E.K."/>
            <person name="Weissman J.S."/>
        </authorList>
    </citation>
    <scope>LEVEL OF PROTEIN EXPRESSION [LARGE SCALE ANALYSIS]</scope>
</reference>
<reference key="6">
    <citation type="journal article" date="2007" name="J. Proteome Res.">
        <title>Large-scale phosphorylation analysis of alpha-factor-arrested Saccharomyces cerevisiae.</title>
        <authorList>
            <person name="Li X."/>
            <person name="Gerber S.A."/>
            <person name="Rudner A.D."/>
            <person name="Beausoleil S.A."/>
            <person name="Haas W."/>
            <person name="Villen J."/>
            <person name="Elias J.E."/>
            <person name="Gygi S.P."/>
        </authorList>
    </citation>
    <scope>IDENTIFICATION BY MASS SPECTROMETRY [LARGE SCALE ANALYSIS]</scope>
    <source>
        <strain>ADR376</strain>
    </source>
</reference>
<reference key="7">
    <citation type="journal article" date="2009" name="Science">
        <title>Global analysis of Cdk1 substrate phosphorylation sites provides insights into evolution.</title>
        <authorList>
            <person name="Holt L.J."/>
            <person name="Tuch B.B."/>
            <person name="Villen J."/>
            <person name="Johnson A.D."/>
            <person name="Gygi S.P."/>
            <person name="Morgan D.O."/>
        </authorList>
    </citation>
    <scope>IDENTIFICATION BY MASS SPECTROMETRY [LARGE SCALE ANALYSIS]</scope>
</reference>
<name>PST2_YEAST</name>
<organism>
    <name type="scientific">Saccharomyces cerevisiae (strain ATCC 204508 / S288c)</name>
    <name type="common">Baker's yeast</name>
    <dbReference type="NCBI Taxonomy" id="559292"/>
    <lineage>
        <taxon>Eukaryota</taxon>
        <taxon>Fungi</taxon>
        <taxon>Dikarya</taxon>
        <taxon>Ascomycota</taxon>
        <taxon>Saccharomycotina</taxon>
        <taxon>Saccharomycetes</taxon>
        <taxon>Saccharomycetales</taxon>
        <taxon>Saccharomycetaceae</taxon>
        <taxon>Saccharomyces</taxon>
    </lineage>
</organism>
<comment type="interaction">
    <interactant intactId="EBI-14064">
        <id>Q12335</id>
    </interactant>
    <interactant intactId="EBI-14064">
        <id>Q12335</id>
        <label>PST2</label>
    </interactant>
    <organismsDiffer>false</organismsDiffer>
    <experiments>4</experiments>
</comment>
<comment type="interaction">
    <interactant intactId="EBI-14064">
        <id>Q12335</id>
    </interactant>
    <interactant intactId="EBI-21445">
        <id>P38234</id>
        <label>RFS1</label>
    </interactant>
    <organismsDiffer>false</organismsDiffer>
    <experiments>5</experiments>
</comment>
<comment type="interaction">
    <interactant intactId="EBI-14064">
        <id>Q12335</id>
    </interactant>
    <interactant intactId="EBI-21840">
        <id>P25349</id>
        <label>YCP4</label>
    </interactant>
    <organismsDiffer>false</organismsDiffer>
    <experiments>7</experiments>
</comment>
<comment type="subcellular location">
    <subcellularLocation>
        <location>Secreted</location>
    </subcellularLocation>
</comment>
<comment type="miscellaneous">
    <text evidence="3">Present with 2330 molecules/cell in log phase SD medium.</text>
</comment>
<comment type="similarity">
    <text evidence="4">Belongs to the WrbA family.</text>
</comment>
<protein>
    <recommendedName>
        <fullName>Protoplast secreted protein 2</fullName>
    </recommendedName>
</protein>
<evidence type="ECO:0000255" key="1"/>
<evidence type="ECO:0000255" key="2">
    <source>
        <dbReference type="PROSITE-ProRule" id="PRU00088"/>
    </source>
</evidence>
<evidence type="ECO:0000269" key="3">
    <source>
    </source>
</evidence>
<evidence type="ECO:0000305" key="4"/>
<evidence type="ECO:0007829" key="5">
    <source>
        <dbReference type="PDB" id="5MP4"/>
    </source>
</evidence>
<proteinExistence type="evidence at protein level"/>
<gene>
    <name type="primary">PST2</name>
    <name type="ordered locus">YDR032C</name>
    <name type="ORF">D3422</name>
    <name type="ORF">YD9673.02C</name>
</gene>
<sequence>MPRVAIIIYTLYGHVAATAEAEKKGIEAAGGSADIYQVEETLSPEVVKALGGAPKPDYPIATQDTLTEYDAFLFGIPTRFGNFPAQWKAFWDRTGGLWAKGALHGKVAGCFVSTGTGGGNEATIMNSLSTLAHHGIIFVPLGYKNVFAELTNMDEVHGGSPWGAGTIAGSDGSRSPSALELQVHEIQGKTFYETVAKF</sequence>